<gene>
    <name evidence="6 9" type="primary">elp4</name>
    <name type="ORF">SPCC11E10.06c</name>
</gene>
<sequence length="361" mass="40385">MSFKRKAAPQIAPTNLPTGVRLSSKDARWITSSGSSSFDYYLSGGIPMKSLLVIEEDSMDYASVLLKFFAAEGLKQDHVIWLGPSIGEMWFRQLPGDSDRPNKNENSAGEDNHSSPPSKNPQQERMKIAWRYEQVSKTKAPTLDMIPPGYTHSFDLSKNLIVKSDMKYAVSPFPLETGSNPYAPVIESLTRFLSTLTPGTVCRLVLPSILSPAFYSIRATHPQHFIRFIHTLSSLIKCTTSVHLICMCSVPSTLFSRDCEQIFWLENLASAVFSLHPFPVKETVNGLVTQPLGLFRIHKLPLALPFTNHANSNEAGDLSFTVSKRRFTIEPWVLPPLDDEQKDTKISNTNPQKQPVKSLDF</sequence>
<reference key="1">
    <citation type="journal article" date="2002" name="Nature">
        <title>The genome sequence of Schizosaccharomyces pombe.</title>
        <authorList>
            <person name="Wood V."/>
            <person name="Gwilliam R."/>
            <person name="Rajandream M.A."/>
            <person name="Lyne M.H."/>
            <person name="Lyne R."/>
            <person name="Stewart A."/>
            <person name="Sgouros J.G."/>
            <person name="Peat N."/>
            <person name="Hayles J."/>
            <person name="Baker S.G."/>
            <person name="Basham D."/>
            <person name="Bowman S."/>
            <person name="Brooks K."/>
            <person name="Brown D."/>
            <person name="Brown S."/>
            <person name="Chillingworth T."/>
            <person name="Churcher C.M."/>
            <person name="Collins M."/>
            <person name="Connor R."/>
            <person name="Cronin A."/>
            <person name="Davis P."/>
            <person name="Feltwell T."/>
            <person name="Fraser A."/>
            <person name="Gentles S."/>
            <person name="Goble A."/>
            <person name="Hamlin N."/>
            <person name="Harris D.E."/>
            <person name="Hidalgo J."/>
            <person name="Hodgson G."/>
            <person name="Holroyd S."/>
            <person name="Hornsby T."/>
            <person name="Howarth S."/>
            <person name="Huckle E.J."/>
            <person name="Hunt S."/>
            <person name="Jagels K."/>
            <person name="James K.D."/>
            <person name="Jones L."/>
            <person name="Jones M."/>
            <person name="Leather S."/>
            <person name="McDonald S."/>
            <person name="McLean J."/>
            <person name="Mooney P."/>
            <person name="Moule S."/>
            <person name="Mungall K.L."/>
            <person name="Murphy L.D."/>
            <person name="Niblett D."/>
            <person name="Odell C."/>
            <person name="Oliver K."/>
            <person name="O'Neil S."/>
            <person name="Pearson D."/>
            <person name="Quail M.A."/>
            <person name="Rabbinowitsch E."/>
            <person name="Rutherford K.M."/>
            <person name="Rutter S."/>
            <person name="Saunders D."/>
            <person name="Seeger K."/>
            <person name="Sharp S."/>
            <person name="Skelton J."/>
            <person name="Simmonds M.N."/>
            <person name="Squares R."/>
            <person name="Squares S."/>
            <person name="Stevens K."/>
            <person name="Taylor K."/>
            <person name="Taylor R.G."/>
            <person name="Tivey A."/>
            <person name="Walsh S.V."/>
            <person name="Warren T."/>
            <person name="Whitehead S."/>
            <person name="Woodward J.R."/>
            <person name="Volckaert G."/>
            <person name="Aert R."/>
            <person name="Robben J."/>
            <person name="Grymonprez B."/>
            <person name="Weltjens I."/>
            <person name="Vanstreels E."/>
            <person name="Rieger M."/>
            <person name="Schaefer M."/>
            <person name="Mueller-Auer S."/>
            <person name="Gabel C."/>
            <person name="Fuchs M."/>
            <person name="Duesterhoeft A."/>
            <person name="Fritzc C."/>
            <person name="Holzer E."/>
            <person name="Moestl D."/>
            <person name="Hilbert H."/>
            <person name="Borzym K."/>
            <person name="Langer I."/>
            <person name="Beck A."/>
            <person name="Lehrach H."/>
            <person name="Reinhardt R."/>
            <person name="Pohl T.M."/>
            <person name="Eger P."/>
            <person name="Zimmermann W."/>
            <person name="Wedler H."/>
            <person name="Wambutt R."/>
            <person name="Purnelle B."/>
            <person name="Goffeau A."/>
            <person name="Cadieu E."/>
            <person name="Dreano S."/>
            <person name="Gloux S."/>
            <person name="Lelaure V."/>
            <person name="Mottier S."/>
            <person name="Galibert F."/>
            <person name="Aves S.J."/>
            <person name="Xiang Z."/>
            <person name="Hunt C."/>
            <person name="Moore K."/>
            <person name="Hurst S.M."/>
            <person name="Lucas M."/>
            <person name="Rochet M."/>
            <person name="Gaillardin C."/>
            <person name="Tallada V.A."/>
            <person name="Garzon A."/>
            <person name="Thode G."/>
            <person name="Daga R.R."/>
            <person name="Cruzado L."/>
            <person name="Jimenez J."/>
            <person name="Sanchez M."/>
            <person name="del Rey F."/>
            <person name="Benito J."/>
            <person name="Dominguez A."/>
            <person name="Revuelta J.L."/>
            <person name="Moreno S."/>
            <person name="Armstrong J."/>
            <person name="Forsburg S.L."/>
            <person name="Cerutti L."/>
            <person name="Lowe T."/>
            <person name="McCombie W.R."/>
            <person name="Paulsen I."/>
            <person name="Potashkin J."/>
            <person name="Shpakovski G.V."/>
            <person name="Ussery D."/>
            <person name="Barrell B.G."/>
            <person name="Nurse P."/>
        </authorList>
    </citation>
    <scope>NUCLEOTIDE SEQUENCE [LARGE SCALE GENOMIC DNA]</scope>
    <source>
        <strain>972 / ATCC 24843</strain>
    </source>
</reference>
<reference key="2">
    <citation type="journal article" date="2006" name="Nat. Biotechnol.">
        <title>ORFeome cloning and global analysis of protein localization in the fission yeast Schizosaccharomyces pombe.</title>
        <authorList>
            <person name="Matsuyama A."/>
            <person name="Arai R."/>
            <person name="Yashiroda Y."/>
            <person name="Shirai A."/>
            <person name="Kamata A."/>
            <person name="Sekido S."/>
            <person name="Kobayashi Y."/>
            <person name="Hashimoto A."/>
            <person name="Hamamoto M."/>
            <person name="Hiraoka Y."/>
            <person name="Horinouchi S."/>
            <person name="Yoshida M."/>
        </authorList>
    </citation>
    <scope>SUBCELLULAR LOCATION [LARGE SCALE ANALYSIS]</scope>
</reference>
<reference key="3">
    <citation type="journal article" date="2012" name="Cell Rep.">
        <title>Translational control of cell division by Elongator.</title>
        <authorList>
            <person name="Bauer F."/>
            <person name="Matsuyama A."/>
            <person name="Candiracci J."/>
            <person name="Dieu M."/>
            <person name="Scheliga J."/>
            <person name="Wolf D.A."/>
            <person name="Yoshida M."/>
            <person name="Hermand D."/>
        </authorList>
    </citation>
    <scope>FUNCTION</scope>
    <scope>PATHWAY</scope>
</reference>
<reference key="4">
    <citation type="journal article" date="2018" name="Cell. Mol. Life Sci.">
        <title>Structural insights into the function of Elongator.</title>
        <authorList>
            <person name="Dalwadi U."/>
            <person name="Yip C.K."/>
        </authorList>
    </citation>
    <scope>REVIEW</scope>
</reference>
<name>ELP4_SCHPO</name>
<proteinExistence type="inferred from homology"/>
<accession>Q9USP1</accession>
<organism>
    <name type="scientific">Schizosaccharomyces pombe (strain 972 / ATCC 24843)</name>
    <name type="common">Fission yeast</name>
    <dbReference type="NCBI Taxonomy" id="284812"/>
    <lineage>
        <taxon>Eukaryota</taxon>
        <taxon>Fungi</taxon>
        <taxon>Dikarya</taxon>
        <taxon>Ascomycota</taxon>
        <taxon>Taphrinomycotina</taxon>
        <taxon>Schizosaccharomycetes</taxon>
        <taxon>Schizosaccharomycetales</taxon>
        <taxon>Schizosaccharomycetaceae</taxon>
        <taxon>Schizosaccharomyces</taxon>
    </lineage>
</organism>
<comment type="function">
    <text evidence="5 7">Component of the elongator complex, a multiprotein complex which is required for multiple tRNA modifications, including mcm5U (5-methoxycarbonylmethyl uridine), mcm5s2U (5-methoxycarbonylmethyl-2-thiouridine), and ncm5U (5-carbamoylmethyl uridine) (PubMed:22768388). The elongator complex catalyzes formation of carboxymethyluridine in the wobble base at position 34 in tRNAs (PubMed:29332244).</text>
</comment>
<comment type="pathway">
    <text evidence="5">tRNA modification; 5-methoxycarbonylmethyl-2-thiouridine-tRNA biosynthesis.</text>
</comment>
<comment type="subunit">
    <text evidence="1">Component of the elongator complex.</text>
</comment>
<comment type="subcellular location">
    <subcellularLocation>
        <location evidence="4">Cytoplasm</location>
    </subcellularLocation>
    <subcellularLocation>
        <location evidence="4">Nucleus</location>
    </subcellularLocation>
</comment>
<comment type="similarity">
    <text evidence="8">Belongs to the ELP4 family.</text>
</comment>
<comment type="caution">
    <text evidence="2">The elongator complex was originally thought to play a role in transcription elongation. However, it is no longer thought to play a direct role in this process and its primary function is thought to be in tRNA modification.</text>
</comment>
<evidence type="ECO:0000250" key="1">
    <source>
        <dbReference type="UniProtKB" id="Q02884"/>
    </source>
</evidence>
<evidence type="ECO:0000250" key="2">
    <source>
        <dbReference type="UniProtKB" id="Q96EB1"/>
    </source>
</evidence>
<evidence type="ECO:0000256" key="3">
    <source>
        <dbReference type="SAM" id="MobiDB-lite"/>
    </source>
</evidence>
<evidence type="ECO:0000269" key="4">
    <source>
    </source>
</evidence>
<evidence type="ECO:0000269" key="5">
    <source>
    </source>
</evidence>
<evidence type="ECO:0000303" key="6">
    <source>
    </source>
</evidence>
<evidence type="ECO:0000303" key="7">
    <source>
    </source>
</evidence>
<evidence type="ECO:0000305" key="8"/>
<evidence type="ECO:0000312" key="9">
    <source>
        <dbReference type="PomBase" id="SPCC11E10.06c"/>
    </source>
</evidence>
<dbReference type="EMBL" id="CU329672">
    <property type="protein sequence ID" value="CAB57848.1"/>
    <property type="molecule type" value="Genomic_DNA"/>
</dbReference>
<dbReference type="PIR" id="T40857">
    <property type="entry name" value="T40857"/>
</dbReference>
<dbReference type="RefSeq" id="NP_588202.1">
    <property type="nucleotide sequence ID" value="NM_001023192.2"/>
</dbReference>
<dbReference type="SMR" id="Q9USP1"/>
<dbReference type="BioGRID" id="275561">
    <property type="interactions" value="52"/>
</dbReference>
<dbReference type="ComplexPortal" id="CPX-25728">
    <property type="entry name" value="Elongator holoenzyme complex"/>
</dbReference>
<dbReference type="FunCoup" id="Q9USP1">
    <property type="interactions" value="614"/>
</dbReference>
<dbReference type="STRING" id="284812.Q9USP1"/>
<dbReference type="iPTMnet" id="Q9USP1"/>
<dbReference type="PaxDb" id="4896-SPCC11E10.06c.1"/>
<dbReference type="EnsemblFungi" id="SPCC11E10.06c.1">
    <property type="protein sequence ID" value="SPCC11E10.06c.1:pep"/>
    <property type="gene ID" value="SPCC11E10.06c"/>
</dbReference>
<dbReference type="GeneID" id="2538987"/>
<dbReference type="KEGG" id="spo:2538987"/>
<dbReference type="PomBase" id="SPCC11E10.06c">
    <property type="gene designation" value="elp4"/>
</dbReference>
<dbReference type="VEuPathDB" id="FungiDB:SPCC11E10.06c"/>
<dbReference type="eggNOG" id="KOG3949">
    <property type="taxonomic scope" value="Eukaryota"/>
</dbReference>
<dbReference type="HOGENOM" id="CLU_040685_0_0_1"/>
<dbReference type="InParanoid" id="Q9USP1"/>
<dbReference type="OMA" id="QGMLKVH"/>
<dbReference type="PhylomeDB" id="Q9USP1"/>
<dbReference type="UniPathway" id="UPA00988"/>
<dbReference type="PRO" id="PR:Q9USP1"/>
<dbReference type="Proteomes" id="UP000002485">
    <property type="component" value="Chromosome III"/>
</dbReference>
<dbReference type="GO" id="GO:0005737">
    <property type="term" value="C:cytoplasm"/>
    <property type="evidence" value="ECO:0000318"/>
    <property type="project" value="GO_Central"/>
</dbReference>
<dbReference type="GO" id="GO:0005829">
    <property type="term" value="C:cytosol"/>
    <property type="evidence" value="ECO:0007005"/>
    <property type="project" value="PomBase"/>
</dbReference>
<dbReference type="GO" id="GO:0033588">
    <property type="term" value="C:elongator holoenzyme complex"/>
    <property type="evidence" value="ECO:0000318"/>
    <property type="project" value="GO_Central"/>
</dbReference>
<dbReference type="GO" id="GO:0005634">
    <property type="term" value="C:nucleus"/>
    <property type="evidence" value="ECO:0007005"/>
    <property type="project" value="PomBase"/>
</dbReference>
<dbReference type="GO" id="GO:0008023">
    <property type="term" value="C:transcription elongation factor complex"/>
    <property type="evidence" value="ECO:0000318"/>
    <property type="project" value="GO_Central"/>
</dbReference>
<dbReference type="GO" id="GO:0140018">
    <property type="term" value="P:regulation of cytoplasmic translational fidelity"/>
    <property type="evidence" value="ECO:0000315"/>
    <property type="project" value="PomBase"/>
</dbReference>
<dbReference type="GO" id="GO:0002926">
    <property type="term" value="P:tRNA wobble base 5-methoxycarbonylmethyl-2-thiouridinylation"/>
    <property type="evidence" value="ECO:0000316"/>
    <property type="project" value="PomBase"/>
</dbReference>
<dbReference type="GO" id="GO:0002098">
    <property type="term" value="P:tRNA wobble uridine modification"/>
    <property type="evidence" value="ECO:0000318"/>
    <property type="project" value="GO_Central"/>
</dbReference>
<dbReference type="CDD" id="cd19494">
    <property type="entry name" value="Elp4"/>
    <property type="match status" value="1"/>
</dbReference>
<dbReference type="Gene3D" id="3.40.50.300">
    <property type="entry name" value="P-loop containing nucleotide triphosphate hydrolases"/>
    <property type="match status" value="1"/>
</dbReference>
<dbReference type="InterPro" id="IPR008728">
    <property type="entry name" value="Elongator_complex_protein_4"/>
</dbReference>
<dbReference type="InterPro" id="IPR027417">
    <property type="entry name" value="P-loop_NTPase"/>
</dbReference>
<dbReference type="PANTHER" id="PTHR12896:SF1">
    <property type="entry name" value="ELONGATOR COMPLEX PROTEIN 4"/>
    <property type="match status" value="1"/>
</dbReference>
<dbReference type="PANTHER" id="PTHR12896">
    <property type="entry name" value="PAX6 NEIGHBOR PROTEIN PAXNEB"/>
    <property type="match status" value="1"/>
</dbReference>
<dbReference type="Pfam" id="PF05625">
    <property type="entry name" value="PAXNEB"/>
    <property type="match status" value="1"/>
</dbReference>
<feature type="chain" id="PRO_0000339338" description="Elongator complex protein 4">
    <location>
        <begin position="1"/>
        <end position="361"/>
    </location>
</feature>
<feature type="region of interest" description="Disordered" evidence="3">
    <location>
        <begin position="93"/>
        <end position="124"/>
    </location>
</feature>
<feature type="region of interest" description="Disordered" evidence="3">
    <location>
        <begin position="338"/>
        <end position="361"/>
    </location>
</feature>
<feature type="compositionally biased region" description="Polar residues" evidence="3">
    <location>
        <begin position="104"/>
        <end position="121"/>
    </location>
</feature>
<feature type="compositionally biased region" description="Polar residues" evidence="3">
    <location>
        <begin position="346"/>
        <end position="355"/>
    </location>
</feature>
<keyword id="KW-0963">Cytoplasm</keyword>
<keyword id="KW-0539">Nucleus</keyword>
<keyword id="KW-1185">Reference proteome</keyword>
<keyword id="KW-0819">tRNA processing</keyword>
<protein>
    <recommendedName>
        <fullName>Elongator complex protein 4</fullName>
    </recommendedName>
</protein>